<gene>
    <name evidence="1" type="primary">rplS</name>
    <name type="ordered locus">Tfu_0666</name>
</gene>
<reference key="1">
    <citation type="journal article" date="2007" name="J. Bacteriol.">
        <title>Genome sequence and analysis of the soil cellulolytic actinomycete Thermobifida fusca YX.</title>
        <authorList>
            <person name="Lykidis A."/>
            <person name="Mavromatis K."/>
            <person name="Ivanova N."/>
            <person name="Anderson I."/>
            <person name="Land M."/>
            <person name="DiBartolo G."/>
            <person name="Martinez M."/>
            <person name="Lapidus A."/>
            <person name="Lucas S."/>
            <person name="Copeland A."/>
            <person name="Richardson P."/>
            <person name="Wilson D.B."/>
            <person name="Kyrpides N."/>
        </authorList>
    </citation>
    <scope>NUCLEOTIDE SEQUENCE [LARGE SCALE GENOMIC DNA]</scope>
    <source>
        <strain>YX</strain>
    </source>
</reference>
<dbReference type="EMBL" id="CP000088">
    <property type="protein sequence ID" value="AAZ54704.1"/>
    <property type="molecule type" value="Genomic_DNA"/>
</dbReference>
<dbReference type="RefSeq" id="WP_011291113.1">
    <property type="nucleotide sequence ID" value="NC_007333.1"/>
</dbReference>
<dbReference type="SMR" id="Q47S63"/>
<dbReference type="STRING" id="269800.Tfu_0666"/>
<dbReference type="KEGG" id="tfu:Tfu_0666"/>
<dbReference type="eggNOG" id="COG0335">
    <property type="taxonomic scope" value="Bacteria"/>
</dbReference>
<dbReference type="HOGENOM" id="CLU_103507_2_1_11"/>
<dbReference type="OrthoDB" id="9803541at2"/>
<dbReference type="GO" id="GO:0022625">
    <property type="term" value="C:cytosolic large ribosomal subunit"/>
    <property type="evidence" value="ECO:0007669"/>
    <property type="project" value="TreeGrafter"/>
</dbReference>
<dbReference type="GO" id="GO:0003735">
    <property type="term" value="F:structural constituent of ribosome"/>
    <property type="evidence" value="ECO:0007669"/>
    <property type="project" value="InterPro"/>
</dbReference>
<dbReference type="GO" id="GO:0006412">
    <property type="term" value="P:translation"/>
    <property type="evidence" value="ECO:0007669"/>
    <property type="project" value="UniProtKB-UniRule"/>
</dbReference>
<dbReference type="FunFam" id="2.30.30.790:FF:000001">
    <property type="entry name" value="50S ribosomal protein L19"/>
    <property type="match status" value="1"/>
</dbReference>
<dbReference type="Gene3D" id="2.30.30.790">
    <property type="match status" value="1"/>
</dbReference>
<dbReference type="HAMAP" id="MF_00402">
    <property type="entry name" value="Ribosomal_bL19"/>
    <property type="match status" value="1"/>
</dbReference>
<dbReference type="InterPro" id="IPR001857">
    <property type="entry name" value="Ribosomal_bL19"/>
</dbReference>
<dbReference type="InterPro" id="IPR018257">
    <property type="entry name" value="Ribosomal_bL19_CS"/>
</dbReference>
<dbReference type="InterPro" id="IPR038657">
    <property type="entry name" value="Ribosomal_bL19_sf"/>
</dbReference>
<dbReference type="InterPro" id="IPR008991">
    <property type="entry name" value="Translation_prot_SH3-like_sf"/>
</dbReference>
<dbReference type="NCBIfam" id="TIGR01024">
    <property type="entry name" value="rplS_bact"/>
    <property type="match status" value="1"/>
</dbReference>
<dbReference type="PANTHER" id="PTHR15680:SF9">
    <property type="entry name" value="LARGE RIBOSOMAL SUBUNIT PROTEIN BL19M"/>
    <property type="match status" value="1"/>
</dbReference>
<dbReference type="PANTHER" id="PTHR15680">
    <property type="entry name" value="RIBOSOMAL PROTEIN L19"/>
    <property type="match status" value="1"/>
</dbReference>
<dbReference type="Pfam" id="PF01245">
    <property type="entry name" value="Ribosomal_L19"/>
    <property type="match status" value="1"/>
</dbReference>
<dbReference type="PIRSF" id="PIRSF002191">
    <property type="entry name" value="Ribosomal_L19"/>
    <property type="match status" value="1"/>
</dbReference>
<dbReference type="PRINTS" id="PR00061">
    <property type="entry name" value="RIBOSOMALL19"/>
</dbReference>
<dbReference type="SUPFAM" id="SSF50104">
    <property type="entry name" value="Translation proteins SH3-like domain"/>
    <property type="match status" value="1"/>
</dbReference>
<dbReference type="PROSITE" id="PS01015">
    <property type="entry name" value="RIBOSOMAL_L19"/>
    <property type="match status" value="1"/>
</dbReference>
<keyword id="KW-0687">Ribonucleoprotein</keyword>
<keyword id="KW-0689">Ribosomal protein</keyword>
<sequence>MHTAIQELEKAQLRSDVPDFRPGDTLNVHVRVTEGNRTRIQVFKGVVIRRQGSGIRETFTVRKISYAVGVERTFPVHSPVIEKIEVVSRGRVRRAKLYYLRNLRGKAARIRERR</sequence>
<accession>Q47S63</accession>
<proteinExistence type="inferred from homology"/>
<name>RL19_THEFY</name>
<comment type="function">
    <text evidence="1">This protein is located at the 30S-50S ribosomal subunit interface and may play a role in the structure and function of the aminoacyl-tRNA binding site.</text>
</comment>
<comment type="similarity">
    <text evidence="1">Belongs to the bacterial ribosomal protein bL19 family.</text>
</comment>
<evidence type="ECO:0000255" key="1">
    <source>
        <dbReference type="HAMAP-Rule" id="MF_00402"/>
    </source>
</evidence>
<evidence type="ECO:0000305" key="2"/>
<feature type="chain" id="PRO_0000226879" description="Large ribosomal subunit protein bL19">
    <location>
        <begin position="1"/>
        <end position="114"/>
    </location>
</feature>
<organism>
    <name type="scientific">Thermobifida fusca (strain YX)</name>
    <dbReference type="NCBI Taxonomy" id="269800"/>
    <lineage>
        <taxon>Bacteria</taxon>
        <taxon>Bacillati</taxon>
        <taxon>Actinomycetota</taxon>
        <taxon>Actinomycetes</taxon>
        <taxon>Streptosporangiales</taxon>
        <taxon>Nocardiopsidaceae</taxon>
        <taxon>Thermobifida</taxon>
    </lineage>
</organism>
<protein>
    <recommendedName>
        <fullName evidence="1">Large ribosomal subunit protein bL19</fullName>
    </recommendedName>
    <alternativeName>
        <fullName evidence="2">50S ribosomal protein L19</fullName>
    </alternativeName>
</protein>